<reference key="1">
    <citation type="submission" date="2007-06" db="EMBL/GenBank/DDBJ databases">
        <title>Complete sequence of Marinomonas sp. MWYL1.</title>
        <authorList>
            <consortium name="US DOE Joint Genome Institute"/>
            <person name="Copeland A."/>
            <person name="Lucas S."/>
            <person name="Lapidus A."/>
            <person name="Barry K."/>
            <person name="Glavina del Rio T."/>
            <person name="Dalin E."/>
            <person name="Tice H."/>
            <person name="Pitluck S."/>
            <person name="Kiss H."/>
            <person name="Brettin T."/>
            <person name="Bruce D."/>
            <person name="Detter J.C."/>
            <person name="Han C."/>
            <person name="Schmutz J."/>
            <person name="Larimer F."/>
            <person name="Land M."/>
            <person name="Hauser L."/>
            <person name="Kyrpides N."/>
            <person name="Kim E."/>
            <person name="Johnston A.W.B."/>
            <person name="Todd J.D."/>
            <person name="Rogers R."/>
            <person name="Wexler M."/>
            <person name="Bond P.L."/>
            <person name="Li Y."/>
            <person name="Richardson P."/>
        </authorList>
    </citation>
    <scope>NUCLEOTIDE SEQUENCE [LARGE SCALE GENOMIC DNA]</scope>
    <source>
        <strain>MWYL1</strain>
    </source>
</reference>
<feature type="chain" id="PRO_0000348765" description="tRNA-cytidine(32) 2-sulfurtransferase">
    <location>
        <begin position="1"/>
        <end position="279"/>
    </location>
</feature>
<feature type="short sequence motif" description="PP-loop motif" evidence="1">
    <location>
        <begin position="46"/>
        <end position="51"/>
    </location>
</feature>
<feature type="binding site" evidence="1">
    <location>
        <position position="121"/>
    </location>
    <ligand>
        <name>[4Fe-4S] cluster</name>
        <dbReference type="ChEBI" id="CHEBI:49883"/>
    </ligand>
</feature>
<feature type="binding site" evidence="1">
    <location>
        <position position="124"/>
    </location>
    <ligand>
        <name>[4Fe-4S] cluster</name>
        <dbReference type="ChEBI" id="CHEBI:49883"/>
    </ligand>
</feature>
<feature type="binding site" evidence="1">
    <location>
        <position position="212"/>
    </location>
    <ligand>
        <name>[4Fe-4S] cluster</name>
        <dbReference type="ChEBI" id="CHEBI:49883"/>
    </ligand>
</feature>
<proteinExistence type="inferred from homology"/>
<protein>
    <recommendedName>
        <fullName evidence="1">tRNA-cytidine(32) 2-sulfurtransferase</fullName>
        <ecNumber evidence="1">2.8.1.-</ecNumber>
    </recommendedName>
    <alternativeName>
        <fullName evidence="1">Two-thiocytidine biosynthesis protein A</fullName>
    </alternativeName>
    <alternativeName>
        <fullName evidence="1">tRNA 2-thiocytidine biosynthesis protein TtcA</fullName>
    </alternativeName>
</protein>
<sequence>MMDLSTRPKEKLELNKLQKRLRRLTGQAIADFNMIEDGDKVMVCLSGGKDSYTMLEILRNLQASAPINFSIVAVNLDQKQPGFPEHILPAYLEELGVDFHILERDTYSIVKEIVPEGKTTCGLCSRLRRGSLYGFAEEIGATKIALGHHRDDILETLFLNMFFGGKLKSMPPKLLSDDGKHIVIRPLAYCKEEDIEAFSVMKEYPIIPCNLCGSQENLQRQVVKDMLQKWEKEFPGRTESMFSAIQNVVPSHLADTKLFDFKGLKQSPAAFDRLNIISL</sequence>
<keyword id="KW-0004">4Fe-4S</keyword>
<keyword id="KW-0067">ATP-binding</keyword>
<keyword id="KW-0963">Cytoplasm</keyword>
<keyword id="KW-0408">Iron</keyword>
<keyword id="KW-0411">Iron-sulfur</keyword>
<keyword id="KW-0460">Magnesium</keyword>
<keyword id="KW-0479">Metal-binding</keyword>
<keyword id="KW-0547">Nucleotide-binding</keyword>
<keyword id="KW-0694">RNA-binding</keyword>
<keyword id="KW-0808">Transferase</keyword>
<keyword id="KW-0819">tRNA processing</keyword>
<keyword id="KW-0820">tRNA-binding</keyword>
<name>TTCA_MARMS</name>
<organism>
    <name type="scientific">Marinomonas sp. (strain MWYL1)</name>
    <dbReference type="NCBI Taxonomy" id="400668"/>
    <lineage>
        <taxon>Bacteria</taxon>
        <taxon>Pseudomonadati</taxon>
        <taxon>Pseudomonadota</taxon>
        <taxon>Gammaproteobacteria</taxon>
        <taxon>Oceanospirillales</taxon>
        <taxon>Oceanospirillaceae</taxon>
        <taxon>Marinomonas</taxon>
    </lineage>
</organism>
<comment type="function">
    <text evidence="1">Catalyzes the ATP-dependent 2-thiolation of cytidine in position 32 of tRNA, to form 2-thiocytidine (s(2)C32). The sulfur atoms are provided by the cysteine/cysteine desulfurase (IscS) system.</text>
</comment>
<comment type="catalytic activity">
    <reaction evidence="1">
        <text>cytidine(32) in tRNA + S-sulfanyl-L-cysteinyl-[cysteine desulfurase] + AH2 + ATP = 2-thiocytidine(32) in tRNA + L-cysteinyl-[cysteine desulfurase] + A + AMP + diphosphate + H(+)</text>
        <dbReference type="Rhea" id="RHEA:57048"/>
        <dbReference type="Rhea" id="RHEA-COMP:10288"/>
        <dbReference type="Rhea" id="RHEA-COMP:12157"/>
        <dbReference type="Rhea" id="RHEA-COMP:12158"/>
        <dbReference type="Rhea" id="RHEA-COMP:14821"/>
        <dbReference type="ChEBI" id="CHEBI:13193"/>
        <dbReference type="ChEBI" id="CHEBI:15378"/>
        <dbReference type="ChEBI" id="CHEBI:17499"/>
        <dbReference type="ChEBI" id="CHEBI:29950"/>
        <dbReference type="ChEBI" id="CHEBI:30616"/>
        <dbReference type="ChEBI" id="CHEBI:33019"/>
        <dbReference type="ChEBI" id="CHEBI:61963"/>
        <dbReference type="ChEBI" id="CHEBI:82748"/>
        <dbReference type="ChEBI" id="CHEBI:141453"/>
        <dbReference type="ChEBI" id="CHEBI:456215"/>
    </reaction>
    <physiologicalReaction direction="left-to-right" evidence="1">
        <dbReference type="Rhea" id="RHEA:57049"/>
    </physiologicalReaction>
</comment>
<comment type="cofactor">
    <cofactor evidence="1">
        <name>Mg(2+)</name>
        <dbReference type="ChEBI" id="CHEBI:18420"/>
    </cofactor>
</comment>
<comment type="cofactor">
    <cofactor evidence="1">
        <name>[4Fe-4S] cluster</name>
        <dbReference type="ChEBI" id="CHEBI:49883"/>
    </cofactor>
    <text evidence="1">Binds 1 [4Fe-4S] cluster per subunit. The cluster is chelated by three Cys residues, the fourth Fe has a free coordination site that may bind a sulfur atom transferred from the persulfide of IscS.</text>
</comment>
<comment type="pathway">
    <text evidence="1">tRNA modification.</text>
</comment>
<comment type="subunit">
    <text evidence="1">Homodimer.</text>
</comment>
<comment type="subcellular location">
    <subcellularLocation>
        <location evidence="1">Cytoplasm</location>
    </subcellularLocation>
</comment>
<comment type="miscellaneous">
    <text evidence="1">The thiolation reaction likely consists of two steps: a first activation step by ATP to form an adenylated intermediate of the target base of tRNA, and a second nucleophilic substitution step of the sulfur (S) atom supplied by the hydrosulfide attached to the Fe-S cluster.</text>
</comment>
<comment type="similarity">
    <text evidence="1">Belongs to the TtcA family.</text>
</comment>
<dbReference type="EC" id="2.8.1.-" evidence="1"/>
<dbReference type="EMBL" id="CP000749">
    <property type="protein sequence ID" value="ABR71152.1"/>
    <property type="molecule type" value="Genomic_DNA"/>
</dbReference>
<dbReference type="SMR" id="A6VXH3"/>
<dbReference type="STRING" id="400668.Mmwyl1_2230"/>
<dbReference type="KEGG" id="mmw:Mmwyl1_2230"/>
<dbReference type="eggNOG" id="COG0037">
    <property type="taxonomic scope" value="Bacteria"/>
</dbReference>
<dbReference type="HOGENOM" id="CLU_026481_0_0_6"/>
<dbReference type="OrthoDB" id="9801054at2"/>
<dbReference type="GO" id="GO:0005737">
    <property type="term" value="C:cytoplasm"/>
    <property type="evidence" value="ECO:0007669"/>
    <property type="project" value="UniProtKB-SubCell"/>
</dbReference>
<dbReference type="GO" id="GO:0051539">
    <property type="term" value="F:4 iron, 4 sulfur cluster binding"/>
    <property type="evidence" value="ECO:0007669"/>
    <property type="project" value="UniProtKB-UniRule"/>
</dbReference>
<dbReference type="GO" id="GO:0005524">
    <property type="term" value="F:ATP binding"/>
    <property type="evidence" value="ECO:0007669"/>
    <property type="project" value="UniProtKB-UniRule"/>
</dbReference>
<dbReference type="GO" id="GO:0000287">
    <property type="term" value="F:magnesium ion binding"/>
    <property type="evidence" value="ECO:0007669"/>
    <property type="project" value="UniProtKB-UniRule"/>
</dbReference>
<dbReference type="GO" id="GO:0016783">
    <property type="term" value="F:sulfurtransferase activity"/>
    <property type="evidence" value="ECO:0007669"/>
    <property type="project" value="UniProtKB-UniRule"/>
</dbReference>
<dbReference type="GO" id="GO:0000049">
    <property type="term" value="F:tRNA binding"/>
    <property type="evidence" value="ECO:0007669"/>
    <property type="project" value="UniProtKB-KW"/>
</dbReference>
<dbReference type="GO" id="GO:0034227">
    <property type="term" value="P:tRNA thio-modification"/>
    <property type="evidence" value="ECO:0007669"/>
    <property type="project" value="UniProtKB-UniRule"/>
</dbReference>
<dbReference type="CDD" id="cd24138">
    <property type="entry name" value="TtcA-like"/>
    <property type="match status" value="1"/>
</dbReference>
<dbReference type="Gene3D" id="3.40.50.620">
    <property type="entry name" value="HUPs"/>
    <property type="match status" value="1"/>
</dbReference>
<dbReference type="HAMAP" id="MF_01850">
    <property type="entry name" value="TtcA"/>
    <property type="match status" value="1"/>
</dbReference>
<dbReference type="InterPro" id="IPR014729">
    <property type="entry name" value="Rossmann-like_a/b/a_fold"/>
</dbReference>
<dbReference type="InterPro" id="IPR011063">
    <property type="entry name" value="TilS/TtcA_N"/>
</dbReference>
<dbReference type="InterPro" id="IPR012089">
    <property type="entry name" value="tRNA_Cyd_32_2_STrfase"/>
</dbReference>
<dbReference type="InterPro" id="IPR035107">
    <property type="entry name" value="tRNA_thiolation_TtcA_Ctu1"/>
</dbReference>
<dbReference type="NCBIfam" id="NF007972">
    <property type="entry name" value="PRK10696.1"/>
    <property type="match status" value="1"/>
</dbReference>
<dbReference type="PANTHER" id="PTHR43686:SF1">
    <property type="entry name" value="AMINOTRAN_5 DOMAIN-CONTAINING PROTEIN"/>
    <property type="match status" value="1"/>
</dbReference>
<dbReference type="PANTHER" id="PTHR43686">
    <property type="entry name" value="SULFURTRANSFERASE-RELATED"/>
    <property type="match status" value="1"/>
</dbReference>
<dbReference type="Pfam" id="PF01171">
    <property type="entry name" value="ATP_bind_3"/>
    <property type="match status" value="1"/>
</dbReference>
<dbReference type="PIRSF" id="PIRSF004976">
    <property type="entry name" value="ATPase_YdaO"/>
    <property type="match status" value="1"/>
</dbReference>
<dbReference type="SUPFAM" id="SSF52402">
    <property type="entry name" value="Adenine nucleotide alpha hydrolases-like"/>
    <property type="match status" value="1"/>
</dbReference>
<evidence type="ECO:0000255" key="1">
    <source>
        <dbReference type="HAMAP-Rule" id="MF_01850"/>
    </source>
</evidence>
<gene>
    <name evidence="1" type="primary">ttcA</name>
    <name type="ordered locus">Mmwyl1_2230</name>
</gene>
<accession>A6VXH3</accession>